<accession>Q1RIY2</accession>
<organism>
    <name type="scientific">Rickettsia bellii (strain RML369-C)</name>
    <dbReference type="NCBI Taxonomy" id="336407"/>
    <lineage>
        <taxon>Bacteria</taxon>
        <taxon>Pseudomonadati</taxon>
        <taxon>Pseudomonadota</taxon>
        <taxon>Alphaproteobacteria</taxon>
        <taxon>Rickettsiales</taxon>
        <taxon>Rickettsiaceae</taxon>
        <taxon>Rickettsieae</taxon>
        <taxon>Rickettsia</taxon>
        <taxon>belli group</taxon>
    </lineage>
</organism>
<protein>
    <recommendedName>
        <fullName>Putative ankyrin repeat protein RBE_0601</fullName>
    </recommendedName>
</protein>
<gene>
    <name type="ordered locus">RBE_0601</name>
</gene>
<reference key="1">
    <citation type="journal article" date="2006" name="PLoS Genet.">
        <title>Genome sequence of Rickettsia bellii illuminates the role of amoebae in gene exchanges between intracellular pathogens.</title>
        <authorList>
            <person name="Ogata H."/>
            <person name="La Scola B."/>
            <person name="Audic S."/>
            <person name="Renesto P."/>
            <person name="Blanc G."/>
            <person name="Robert C."/>
            <person name="Fournier P.-E."/>
            <person name="Claverie J.-M."/>
            <person name="Raoult D."/>
        </authorList>
    </citation>
    <scope>NUCLEOTIDE SEQUENCE [LARGE SCALE GENOMIC DNA]</scope>
    <source>
        <strain>RML369-C</strain>
    </source>
</reference>
<dbReference type="EMBL" id="CP000087">
    <property type="protein sequence ID" value="ABE04682.1"/>
    <property type="molecule type" value="Genomic_DNA"/>
</dbReference>
<dbReference type="RefSeq" id="WP_011477270.1">
    <property type="nucleotide sequence ID" value="NC_007940.1"/>
</dbReference>
<dbReference type="SMR" id="Q1RIY2"/>
<dbReference type="KEGG" id="rbe:RBE_0601"/>
<dbReference type="HOGENOM" id="CLU_667097_0_0_5"/>
<dbReference type="OrthoDB" id="671583at2"/>
<dbReference type="Proteomes" id="UP000001951">
    <property type="component" value="Chromosome"/>
</dbReference>
<dbReference type="Gene3D" id="1.25.40.20">
    <property type="entry name" value="Ankyrin repeat-containing domain"/>
    <property type="match status" value="2"/>
</dbReference>
<dbReference type="InterPro" id="IPR002110">
    <property type="entry name" value="Ankyrin_rpt"/>
</dbReference>
<dbReference type="InterPro" id="IPR036770">
    <property type="entry name" value="Ankyrin_rpt-contain_sf"/>
</dbReference>
<dbReference type="InterPro" id="IPR051616">
    <property type="entry name" value="Cul2-RING_E3_ligase_SR"/>
</dbReference>
<dbReference type="PANTHER" id="PTHR46224">
    <property type="entry name" value="ANKYRIN REPEAT FAMILY PROTEIN"/>
    <property type="match status" value="1"/>
</dbReference>
<dbReference type="Pfam" id="PF12796">
    <property type="entry name" value="Ank_2"/>
    <property type="match status" value="1"/>
</dbReference>
<dbReference type="SMART" id="SM00248">
    <property type="entry name" value="ANK"/>
    <property type="match status" value="5"/>
</dbReference>
<dbReference type="SUPFAM" id="SSF48403">
    <property type="entry name" value="Ankyrin repeat"/>
    <property type="match status" value="1"/>
</dbReference>
<dbReference type="PROSITE" id="PS50297">
    <property type="entry name" value="ANK_REP_REGION"/>
    <property type="match status" value="1"/>
</dbReference>
<keyword id="KW-0040">ANK repeat</keyword>
<keyword id="KW-0677">Repeat</keyword>
<name>Y601_RICBR</name>
<feature type="chain" id="PRO_0000280915" description="Putative ankyrin repeat protein RBE_0601">
    <location>
        <begin position="1"/>
        <end position="366"/>
    </location>
</feature>
<feature type="repeat" description="ANK 1">
    <location>
        <begin position="39"/>
        <end position="68"/>
    </location>
</feature>
<feature type="repeat" description="ANK 2">
    <location>
        <begin position="94"/>
        <end position="124"/>
    </location>
</feature>
<feature type="repeat" description="ANK 3">
    <location>
        <begin position="131"/>
        <end position="160"/>
    </location>
</feature>
<feature type="repeat" description="ANK 4">
    <location>
        <begin position="162"/>
        <end position="186"/>
    </location>
</feature>
<feature type="repeat" description="ANK 5">
    <location>
        <begin position="210"/>
        <end position="239"/>
    </location>
</feature>
<feature type="repeat" description="ANK 6">
    <location>
        <begin position="250"/>
        <end position="280"/>
    </location>
</feature>
<sequence length="366" mass="40731">MKKSSSLALGNFFKTKKQILKADIQKLIKTNQINYVDPKHGTALNRAIKLKDEKIITELLAKKVDINEAIYFAIGHEYTLEEIKTLISLSSSELPDEYLYKAVHQGRLDLVQYFIEEKNFDVNTTINNPLHGGAILSIATMGEHIDVINYLLKNGAIASQGVISAILKGNIEILEKLFEYGATAHDGYSEDLVALLVNAAIPANDPTYCKSSNSETKEDLSNYVETLKFLLEHGGNPNAEFLERGTVILIALSALMDEPKNDTYKDICKLLIQYGADTSKFKSYTETINNLKKEIIEDMKVVDKSDFKDEGYVSDSAEADQLSKKGSKLVDTSSKSVFFSLEEIIEKNPTTLGGETDIVKSEFFNS</sequence>
<proteinExistence type="predicted"/>